<proteinExistence type="inferred from homology"/>
<accession>A5UGT6</accession>
<sequence length="232" mass="26573">MSRFTFKQFHINQDSCAMKVSTDGILLGAWADVKHCKNILDMGSGTGLLALMLAQRTEENCQIQAVELDPIAVKQAQENINDSVWKNRIQLIQTDIQHFLQTTAQTFDLIVANPPYFEQGIACKNEERELARYTKQSHLNWLEWAATRLSENGRISFVLPYEAGKTLIKSTALFCIKQTNVITKIGKTPQRMLLTFAKQPQVLMQDQLVIYDADNQYTEAFIKLTKDFYLKF</sequence>
<comment type="function">
    <text evidence="1">Specifically methylates the adenine in position 37 of tRNA(1)(Val) (anticodon cmo5UAC).</text>
</comment>
<comment type="catalytic activity">
    <reaction evidence="1">
        <text>adenosine(37) in tRNA1(Val) + S-adenosyl-L-methionine = N(6)-methyladenosine(37) in tRNA1(Val) + S-adenosyl-L-homocysteine + H(+)</text>
        <dbReference type="Rhea" id="RHEA:43160"/>
        <dbReference type="Rhea" id="RHEA-COMP:10369"/>
        <dbReference type="Rhea" id="RHEA-COMP:10370"/>
        <dbReference type="ChEBI" id="CHEBI:15378"/>
        <dbReference type="ChEBI" id="CHEBI:57856"/>
        <dbReference type="ChEBI" id="CHEBI:59789"/>
        <dbReference type="ChEBI" id="CHEBI:74411"/>
        <dbReference type="ChEBI" id="CHEBI:74449"/>
        <dbReference type="EC" id="2.1.1.223"/>
    </reaction>
</comment>
<comment type="subcellular location">
    <subcellularLocation>
        <location evidence="1">Cytoplasm</location>
    </subcellularLocation>
</comment>
<comment type="similarity">
    <text evidence="1">Belongs to the methyltransferase superfamily. tRNA (adenine-N(6)-)-methyltransferase family.</text>
</comment>
<name>TRMN6_HAEIG</name>
<protein>
    <recommendedName>
        <fullName evidence="1">tRNA1(Val) (adenine(37)-N6)-methyltransferase</fullName>
        <ecNumber evidence="1">2.1.1.223</ecNumber>
    </recommendedName>
    <alternativeName>
        <fullName evidence="1">tRNA m6A37 methyltransferase</fullName>
    </alternativeName>
</protein>
<organism>
    <name type="scientific">Haemophilus influenzae (strain PittGG)</name>
    <dbReference type="NCBI Taxonomy" id="374931"/>
    <lineage>
        <taxon>Bacteria</taxon>
        <taxon>Pseudomonadati</taxon>
        <taxon>Pseudomonadota</taxon>
        <taxon>Gammaproteobacteria</taxon>
        <taxon>Pasteurellales</taxon>
        <taxon>Pasteurellaceae</taxon>
        <taxon>Haemophilus</taxon>
    </lineage>
</organism>
<gene>
    <name type="ordered locus">CGSHiGG_05325</name>
</gene>
<feature type="chain" id="PRO_0000387385" description="tRNA1(Val) (adenine(37)-N6)-methyltransferase">
    <location>
        <begin position="1"/>
        <end position="232"/>
    </location>
</feature>
<dbReference type="EC" id="2.1.1.223" evidence="1"/>
<dbReference type="EMBL" id="CP000672">
    <property type="protein sequence ID" value="ABQ99991.1"/>
    <property type="molecule type" value="Genomic_DNA"/>
</dbReference>
<dbReference type="SMR" id="A5UGT6"/>
<dbReference type="KEGG" id="hiq:CGSHiGG_05325"/>
<dbReference type="HOGENOM" id="CLU_061983_0_0_6"/>
<dbReference type="Proteomes" id="UP000001990">
    <property type="component" value="Chromosome"/>
</dbReference>
<dbReference type="GO" id="GO:0005737">
    <property type="term" value="C:cytoplasm"/>
    <property type="evidence" value="ECO:0007669"/>
    <property type="project" value="UniProtKB-SubCell"/>
</dbReference>
<dbReference type="GO" id="GO:0003676">
    <property type="term" value="F:nucleic acid binding"/>
    <property type="evidence" value="ECO:0007669"/>
    <property type="project" value="InterPro"/>
</dbReference>
<dbReference type="GO" id="GO:0016430">
    <property type="term" value="F:tRNA (adenine-N6)-methyltransferase activity"/>
    <property type="evidence" value="ECO:0007669"/>
    <property type="project" value="UniProtKB-UniRule"/>
</dbReference>
<dbReference type="GO" id="GO:0032259">
    <property type="term" value="P:methylation"/>
    <property type="evidence" value="ECO:0007669"/>
    <property type="project" value="UniProtKB-KW"/>
</dbReference>
<dbReference type="GO" id="GO:0008033">
    <property type="term" value="P:tRNA processing"/>
    <property type="evidence" value="ECO:0007669"/>
    <property type="project" value="UniProtKB-UniRule"/>
</dbReference>
<dbReference type="CDD" id="cd02440">
    <property type="entry name" value="AdoMet_MTases"/>
    <property type="match status" value="1"/>
</dbReference>
<dbReference type="Gene3D" id="3.40.50.150">
    <property type="entry name" value="Vaccinia Virus protein VP39"/>
    <property type="match status" value="1"/>
</dbReference>
<dbReference type="HAMAP" id="MF_01872">
    <property type="entry name" value="tRNA_methyltr_YfiC"/>
    <property type="match status" value="1"/>
</dbReference>
<dbReference type="InterPro" id="IPR002052">
    <property type="entry name" value="DNA_methylase_N6_adenine_CS"/>
</dbReference>
<dbReference type="InterPro" id="IPR029063">
    <property type="entry name" value="SAM-dependent_MTases_sf"/>
</dbReference>
<dbReference type="InterPro" id="IPR007848">
    <property type="entry name" value="Small_mtfrase_dom"/>
</dbReference>
<dbReference type="InterPro" id="IPR050210">
    <property type="entry name" value="tRNA_Adenine-N(6)_MTase"/>
</dbReference>
<dbReference type="InterPro" id="IPR022882">
    <property type="entry name" value="tRNA_adenine-N6_MeTrfase"/>
</dbReference>
<dbReference type="PANTHER" id="PTHR47739">
    <property type="entry name" value="TRNA1(VAL) (ADENINE(37)-N6)-METHYLTRANSFERASE"/>
    <property type="match status" value="1"/>
</dbReference>
<dbReference type="PANTHER" id="PTHR47739:SF1">
    <property type="entry name" value="TRNA1(VAL) (ADENINE(37)-N6)-METHYLTRANSFERASE"/>
    <property type="match status" value="1"/>
</dbReference>
<dbReference type="Pfam" id="PF05175">
    <property type="entry name" value="MTS"/>
    <property type="match status" value="1"/>
</dbReference>
<dbReference type="PRINTS" id="PR00507">
    <property type="entry name" value="N12N6MTFRASE"/>
</dbReference>
<dbReference type="SUPFAM" id="SSF53335">
    <property type="entry name" value="S-adenosyl-L-methionine-dependent methyltransferases"/>
    <property type="match status" value="1"/>
</dbReference>
<dbReference type="PROSITE" id="PS00092">
    <property type="entry name" value="N6_MTASE"/>
    <property type="match status" value="1"/>
</dbReference>
<keyword id="KW-0963">Cytoplasm</keyword>
<keyword id="KW-0489">Methyltransferase</keyword>
<keyword id="KW-0949">S-adenosyl-L-methionine</keyword>
<keyword id="KW-0808">Transferase</keyword>
<keyword id="KW-0819">tRNA processing</keyword>
<evidence type="ECO:0000255" key="1">
    <source>
        <dbReference type="HAMAP-Rule" id="MF_01872"/>
    </source>
</evidence>
<reference key="1">
    <citation type="journal article" date="2007" name="Genome Biol.">
        <title>Characterization and modeling of the Haemophilus influenzae core and supragenomes based on the complete genomic sequences of Rd and 12 clinical nontypeable strains.</title>
        <authorList>
            <person name="Hogg J.S."/>
            <person name="Hu F.Z."/>
            <person name="Janto B."/>
            <person name="Boissy R."/>
            <person name="Hayes J."/>
            <person name="Keefe R."/>
            <person name="Post J.C."/>
            <person name="Ehrlich G.D."/>
        </authorList>
    </citation>
    <scope>NUCLEOTIDE SEQUENCE [LARGE SCALE GENOMIC DNA]</scope>
    <source>
        <strain>PittGG</strain>
    </source>
</reference>